<proteinExistence type="inferred from homology"/>
<name>RBL_BAMML</name>
<feature type="chain" id="PRO_0000062368" description="Ribulose bisphosphate carboxylase large chain">
    <location>
        <begin position="1" status="less than"/>
        <end position="440" status="greater than"/>
    </location>
</feature>
<feature type="active site" description="Proton acceptor" evidence="1">
    <location>
        <position position="164"/>
    </location>
</feature>
<feature type="active site" description="Proton acceptor" evidence="1">
    <location>
        <position position="283"/>
    </location>
</feature>
<feature type="binding site" description="in homodimeric partner" evidence="1">
    <location>
        <position position="112"/>
    </location>
    <ligand>
        <name>substrate</name>
    </ligand>
</feature>
<feature type="binding site" evidence="1">
    <location>
        <position position="162"/>
    </location>
    <ligand>
        <name>substrate</name>
    </ligand>
</feature>
<feature type="binding site" evidence="1">
    <location>
        <position position="166"/>
    </location>
    <ligand>
        <name>substrate</name>
    </ligand>
</feature>
<feature type="binding site" description="via carbamate group" evidence="1">
    <location>
        <position position="190"/>
    </location>
    <ligand>
        <name>Mg(2+)</name>
        <dbReference type="ChEBI" id="CHEBI:18420"/>
    </ligand>
</feature>
<feature type="binding site" evidence="1">
    <location>
        <position position="192"/>
    </location>
    <ligand>
        <name>Mg(2+)</name>
        <dbReference type="ChEBI" id="CHEBI:18420"/>
    </ligand>
</feature>
<feature type="binding site" evidence="1">
    <location>
        <position position="193"/>
    </location>
    <ligand>
        <name>Mg(2+)</name>
        <dbReference type="ChEBI" id="CHEBI:18420"/>
    </ligand>
</feature>
<feature type="binding site" evidence="1">
    <location>
        <position position="284"/>
    </location>
    <ligand>
        <name>substrate</name>
    </ligand>
</feature>
<feature type="binding site" evidence="1">
    <location>
        <position position="316"/>
    </location>
    <ligand>
        <name>substrate</name>
    </ligand>
</feature>
<feature type="binding site" evidence="1">
    <location>
        <position position="368"/>
    </location>
    <ligand>
        <name>substrate</name>
    </ligand>
</feature>
<feature type="site" description="Transition state stabilizer" evidence="1">
    <location>
        <position position="323"/>
    </location>
</feature>
<feature type="modified residue" description="N6,N6,N6-trimethyllysine" evidence="1">
    <location>
        <position position="3"/>
    </location>
</feature>
<feature type="modified residue" description="N6-carboxylysine" evidence="1">
    <location>
        <position position="190"/>
    </location>
</feature>
<feature type="disulfide bond" description="Interchain; in linked form" evidence="1">
    <location>
        <position position="236"/>
    </location>
</feature>
<feature type="non-terminal residue">
    <location>
        <position position="1"/>
    </location>
</feature>
<feature type="non-terminal residue">
    <location>
        <position position="440"/>
    </location>
</feature>
<keyword id="KW-0113">Calvin cycle</keyword>
<keyword id="KW-0120">Carbon dioxide fixation</keyword>
<keyword id="KW-0150">Chloroplast</keyword>
<keyword id="KW-1015">Disulfide bond</keyword>
<keyword id="KW-0456">Lyase</keyword>
<keyword id="KW-0460">Magnesium</keyword>
<keyword id="KW-0479">Metal-binding</keyword>
<keyword id="KW-0488">Methylation</keyword>
<keyword id="KW-0503">Monooxygenase</keyword>
<keyword id="KW-0560">Oxidoreductase</keyword>
<keyword id="KW-0601">Photorespiration</keyword>
<keyword id="KW-0602">Photosynthesis</keyword>
<keyword id="KW-0934">Plastid</keyword>
<accession>P51994</accession>
<evidence type="ECO:0000255" key="1">
    <source>
        <dbReference type="HAMAP-Rule" id="MF_01338"/>
    </source>
</evidence>
<reference key="1">
    <citation type="submission" date="1992-06" db="EMBL/GenBank/DDBJ databases">
        <authorList>
            <person name="Duvall M.R."/>
            <person name="Clegg M.T."/>
            <person name="Chase M.W."/>
            <person name="Clark W.D."/>
            <person name="Kress J.W."/>
            <person name="Zimmer E.A."/>
            <person name="Hills H.G."/>
            <person name="Eguiarte L.E."/>
            <person name="Smith J.F."/>
            <person name="Gaut B.S."/>
            <person name="Learn G.H."/>
        </authorList>
    </citation>
    <scope>NUCLEOTIDE SEQUENCE [GENOMIC DNA]</scope>
    <source>
        <tissue>Leaf</tissue>
    </source>
</reference>
<dbReference type="EC" id="4.1.1.39" evidence="1"/>
<dbReference type="EMBL" id="M91626">
    <property type="protein sequence ID" value="AAA84036.1"/>
    <property type="molecule type" value="Genomic_DNA"/>
</dbReference>
<dbReference type="GO" id="GO:0009507">
    <property type="term" value="C:chloroplast"/>
    <property type="evidence" value="ECO:0007669"/>
    <property type="project" value="UniProtKB-SubCell"/>
</dbReference>
<dbReference type="GO" id="GO:0000287">
    <property type="term" value="F:magnesium ion binding"/>
    <property type="evidence" value="ECO:0007669"/>
    <property type="project" value="InterPro"/>
</dbReference>
<dbReference type="GO" id="GO:0004497">
    <property type="term" value="F:monooxygenase activity"/>
    <property type="evidence" value="ECO:0007669"/>
    <property type="project" value="UniProtKB-KW"/>
</dbReference>
<dbReference type="GO" id="GO:0016984">
    <property type="term" value="F:ribulose-bisphosphate carboxylase activity"/>
    <property type="evidence" value="ECO:0007669"/>
    <property type="project" value="UniProtKB-EC"/>
</dbReference>
<dbReference type="GO" id="GO:0009853">
    <property type="term" value="P:photorespiration"/>
    <property type="evidence" value="ECO:0007669"/>
    <property type="project" value="UniProtKB-KW"/>
</dbReference>
<dbReference type="GO" id="GO:0019253">
    <property type="term" value="P:reductive pentose-phosphate cycle"/>
    <property type="evidence" value="ECO:0007669"/>
    <property type="project" value="UniProtKB-KW"/>
</dbReference>
<dbReference type="CDD" id="cd08212">
    <property type="entry name" value="RuBisCO_large_I"/>
    <property type="match status" value="1"/>
</dbReference>
<dbReference type="FunFam" id="3.30.70.150:FF:000001">
    <property type="entry name" value="Ribulose bisphosphate carboxylase large chain"/>
    <property type="match status" value="1"/>
</dbReference>
<dbReference type="Gene3D" id="3.20.20.110">
    <property type="entry name" value="Ribulose bisphosphate carboxylase, large subunit, C-terminal domain"/>
    <property type="match status" value="1"/>
</dbReference>
<dbReference type="Gene3D" id="3.30.70.150">
    <property type="entry name" value="RuBisCO large subunit, N-terminal domain"/>
    <property type="match status" value="1"/>
</dbReference>
<dbReference type="HAMAP" id="MF_01338">
    <property type="entry name" value="RuBisCO_L_type1"/>
    <property type="match status" value="1"/>
</dbReference>
<dbReference type="InterPro" id="IPR033966">
    <property type="entry name" value="RuBisCO"/>
</dbReference>
<dbReference type="InterPro" id="IPR020878">
    <property type="entry name" value="RuBisCo_large_chain_AS"/>
</dbReference>
<dbReference type="InterPro" id="IPR000685">
    <property type="entry name" value="RuBisCO_lsu_C"/>
</dbReference>
<dbReference type="InterPro" id="IPR036376">
    <property type="entry name" value="RuBisCO_lsu_C_sf"/>
</dbReference>
<dbReference type="InterPro" id="IPR017443">
    <property type="entry name" value="RuBisCO_lsu_fd_N"/>
</dbReference>
<dbReference type="InterPro" id="IPR036422">
    <property type="entry name" value="RuBisCO_lsu_N_sf"/>
</dbReference>
<dbReference type="InterPro" id="IPR020888">
    <property type="entry name" value="RuBisCO_lsuI"/>
</dbReference>
<dbReference type="NCBIfam" id="NF003252">
    <property type="entry name" value="PRK04208.1"/>
    <property type="match status" value="1"/>
</dbReference>
<dbReference type="PANTHER" id="PTHR42704">
    <property type="entry name" value="RIBULOSE BISPHOSPHATE CARBOXYLASE"/>
    <property type="match status" value="1"/>
</dbReference>
<dbReference type="PANTHER" id="PTHR42704:SF15">
    <property type="entry name" value="RIBULOSE BISPHOSPHATE CARBOXYLASE LARGE CHAIN"/>
    <property type="match status" value="1"/>
</dbReference>
<dbReference type="Pfam" id="PF00016">
    <property type="entry name" value="RuBisCO_large"/>
    <property type="match status" value="1"/>
</dbReference>
<dbReference type="Pfam" id="PF02788">
    <property type="entry name" value="RuBisCO_large_N"/>
    <property type="match status" value="1"/>
</dbReference>
<dbReference type="SFLD" id="SFLDG01052">
    <property type="entry name" value="RuBisCO"/>
    <property type="match status" value="1"/>
</dbReference>
<dbReference type="SFLD" id="SFLDS00014">
    <property type="entry name" value="RuBisCO"/>
    <property type="match status" value="1"/>
</dbReference>
<dbReference type="SFLD" id="SFLDG00301">
    <property type="entry name" value="RuBisCO-like_proteins"/>
    <property type="match status" value="1"/>
</dbReference>
<dbReference type="SUPFAM" id="SSF51649">
    <property type="entry name" value="RuBisCo, C-terminal domain"/>
    <property type="match status" value="1"/>
</dbReference>
<dbReference type="SUPFAM" id="SSF54966">
    <property type="entry name" value="RuBisCO, large subunit, small (N-terminal) domain"/>
    <property type="match status" value="1"/>
</dbReference>
<dbReference type="PROSITE" id="PS00157">
    <property type="entry name" value="RUBISCO_LARGE"/>
    <property type="match status" value="1"/>
</dbReference>
<sequence length="440" mass="48775">GFKAGVKDYKLTYYTPEYETKDTDILAAFRVTPQPGVPPEEAGAAVAAESSTGTWTTVWTDGLTSLDRYKGRCYHIEPVVGEENQYIAYVAYPLDLFEEGSVTNMFTSIVGNVFGFKALRALRLEDLRIPTTYSKTFLGPPHGIQVERDKLNKYGRPFLGCTIKPKLGLSAKNYGRACYECLRGGLDFTKDDENVNSQPFXRWRDRXVFCAEAXYKAQAETGEIKGHYLNATAGTCEEMIKRAVFARELGAPIVMHDYLTGGFTANTSLAHYCRDNGLLLHIHRAMHAVIDRQKNHGMHFRVLAKALRMSGGDHIHAGTVVGKLEGEREMTLGFVDLLRDDFIEKDRARGIFFTQDWVSMPGVIPVASGGIHVWHMPALTEIFGDDSVLQFGGGTLGHPWXNAPGAAANRVALEACVQARNEGRDLAREGNEIIRAACKW</sequence>
<organism>
    <name type="scientific">Bambusa multiplex</name>
    <name type="common">Hedge bamboo</name>
    <name type="synonym">Bambusa glaucescens</name>
    <dbReference type="NCBI Taxonomy" id="4582"/>
    <lineage>
        <taxon>Eukaryota</taxon>
        <taxon>Viridiplantae</taxon>
        <taxon>Streptophyta</taxon>
        <taxon>Embryophyta</taxon>
        <taxon>Tracheophyta</taxon>
        <taxon>Spermatophyta</taxon>
        <taxon>Magnoliopsida</taxon>
        <taxon>Liliopsida</taxon>
        <taxon>Poales</taxon>
        <taxon>Poaceae</taxon>
        <taxon>BOP clade</taxon>
        <taxon>Bambusoideae</taxon>
        <taxon>Bambusodae</taxon>
        <taxon>Bambuseae</taxon>
        <taxon>Bambusinae</taxon>
        <taxon>Bambusa</taxon>
    </lineage>
</organism>
<protein>
    <recommendedName>
        <fullName evidence="1">Ribulose bisphosphate carboxylase large chain</fullName>
        <shortName evidence="1">RuBisCO large subunit</shortName>
        <ecNumber evidence="1">4.1.1.39</ecNumber>
    </recommendedName>
</protein>
<geneLocation type="chloroplast"/>
<gene>
    <name evidence="1" type="primary">rbcL</name>
</gene>
<comment type="function">
    <text evidence="1">RuBisCO catalyzes two reactions: the carboxylation of D-ribulose 1,5-bisphosphate, the primary event in carbon dioxide fixation, as well as the oxidative fragmentation of the pentose substrate in the photorespiration process. Both reactions occur simultaneously and in competition at the same active site.</text>
</comment>
<comment type="catalytic activity">
    <reaction evidence="1">
        <text>2 (2R)-3-phosphoglycerate + 2 H(+) = D-ribulose 1,5-bisphosphate + CO2 + H2O</text>
        <dbReference type="Rhea" id="RHEA:23124"/>
        <dbReference type="ChEBI" id="CHEBI:15377"/>
        <dbReference type="ChEBI" id="CHEBI:15378"/>
        <dbReference type="ChEBI" id="CHEBI:16526"/>
        <dbReference type="ChEBI" id="CHEBI:57870"/>
        <dbReference type="ChEBI" id="CHEBI:58272"/>
        <dbReference type="EC" id="4.1.1.39"/>
    </reaction>
</comment>
<comment type="catalytic activity">
    <reaction evidence="1">
        <text>D-ribulose 1,5-bisphosphate + O2 = 2-phosphoglycolate + (2R)-3-phosphoglycerate + 2 H(+)</text>
        <dbReference type="Rhea" id="RHEA:36631"/>
        <dbReference type="ChEBI" id="CHEBI:15378"/>
        <dbReference type="ChEBI" id="CHEBI:15379"/>
        <dbReference type="ChEBI" id="CHEBI:57870"/>
        <dbReference type="ChEBI" id="CHEBI:58033"/>
        <dbReference type="ChEBI" id="CHEBI:58272"/>
    </reaction>
</comment>
<comment type="cofactor">
    <cofactor evidence="1">
        <name>Mg(2+)</name>
        <dbReference type="ChEBI" id="CHEBI:18420"/>
    </cofactor>
    <text evidence="1">Binds 1 Mg(2+) ion per subunit.</text>
</comment>
<comment type="subunit">
    <text evidence="1">Heterohexadecamer of 8 large chains and 8 small chains; disulfide-linked. The disulfide link is formed within the large subunit homodimers.</text>
</comment>
<comment type="subcellular location">
    <subcellularLocation>
        <location>Plastid</location>
        <location>Chloroplast</location>
    </subcellularLocation>
</comment>
<comment type="PTM">
    <text evidence="1">The disulfide bond which can form in the large chain dimeric partners within the hexadecamer appears to be associated with oxidative stress and protein turnover.</text>
</comment>
<comment type="miscellaneous">
    <text evidence="1">The basic functional RuBisCO is composed of a large chain homodimer in a 'head-to-tail' conformation. In form I RuBisCO this homodimer is arranged in a barrel-like tetramer with the small subunits forming a tetrameric 'cap' on each end of the 'barrel'.</text>
</comment>
<comment type="similarity">
    <text evidence="1">Belongs to the RuBisCO large chain family. Type I subfamily.</text>
</comment>